<proteinExistence type="inferred from homology"/>
<feature type="signal peptide" evidence="3">
    <location>
        <begin position="1"/>
        <end position="22"/>
    </location>
</feature>
<feature type="chain" id="PRO_0000418298" description="UL37 immediate early glycoprotein">
    <location>
        <begin position="23"/>
        <end position="488"/>
    </location>
</feature>
<feature type="transmembrane region" description="Helical" evidence="3">
    <location>
        <begin position="439"/>
        <end position="459"/>
    </location>
</feature>
<feature type="region of interest" description="Disordered" evidence="4">
    <location>
        <begin position="83"/>
        <end position="119"/>
    </location>
</feature>
<feature type="compositionally biased region" description="Acidic residues" evidence="4">
    <location>
        <begin position="83"/>
        <end position="107"/>
    </location>
</feature>
<feature type="site" description="Cleavage site" evidence="1">
    <location>
        <begin position="193"/>
        <end position="194"/>
    </location>
</feature>
<feature type="glycosylation site" description="N-linked (GlcNAc...) asparagine; by host" evidence="3">
    <location>
        <position position="206"/>
    </location>
</feature>
<feature type="glycosylation site" description="N-linked (GlcNAc...) asparagine; by host" evidence="3">
    <location>
        <position position="210"/>
    </location>
</feature>
<feature type="glycosylation site" description="N-linked (GlcNAc...) asparagine; by host" evidence="3">
    <location>
        <position position="219"/>
    </location>
</feature>
<feature type="glycosylation site" description="N-linked (GlcNAc...) asparagine; by host" evidence="3">
    <location>
        <position position="223"/>
    </location>
</feature>
<feature type="glycosylation site" description="N-linked (GlcNAc...) asparagine; by host" evidence="3">
    <location>
        <position position="242"/>
    </location>
</feature>
<feature type="glycosylation site" description="N-linked (GlcNAc...) asparagine; by host" evidence="3">
    <location>
        <position position="275"/>
    </location>
</feature>
<feature type="glycosylation site" description="N-linked (GlcNAc...) asparagine; by host" evidence="3">
    <location>
        <position position="281"/>
    </location>
</feature>
<feature type="glycosylation site" description="N-linked (GlcNAc...) asparagine; by host" evidence="3">
    <location>
        <position position="294"/>
    </location>
</feature>
<feature type="glycosylation site" description="N-linked (GlcNAc...) asparagine; by host" evidence="3">
    <location>
        <position position="297"/>
    </location>
</feature>
<feature type="glycosylation site" description="N-linked (GlcNAc...) asparagine; by host" evidence="3">
    <location>
        <position position="306"/>
    </location>
</feature>
<feature type="glycosylation site" description="N-linked (GlcNAc...) asparagine; by host" evidence="3">
    <location>
        <position position="333"/>
    </location>
</feature>
<feature type="glycosylation site" description="N-linked (GlcNAc...) asparagine; by host" evidence="3">
    <location>
        <position position="337"/>
    </location>
</feature>
<feature type="glycosylation site" description="N-linked (GlcNAc...) asparagine; by host" evidence="3">
    <location>
        <position position="343"/>
    </location>
</feature>
<feature type="glycosylation site" description="N-linked (GlcNAc...) asparagine; by host" evidence="3">
    <location>
        <position position="384"/>
    </location>
</feature>
<feature type="glycosylation site" description="N-linked (GlcNAc...) asparagine; by host" evidence="3">
    <location>
        <position position="391"/>
    </location>
</feature>
<feature type="splice variant" id="VSP_044022" description="In isoform vMIA." evidence="5">
    <original>H</original>
    <variation>Q</variation>
    <location>
        <position position="163"/>
    </location>
</feature>
<feature type="splice variant" id="VSP_044023" description="In isoform vMIA." evidence="5">
    <location>
        <begin position="164"/>
        <end position="487"/>
    </location>
</feature>
<feature type="splice variant" id="VSP_044024" description="In isoform pUL37m." evidence="5">
    <location>
        <begin position="178"/>
        <end position="262"/>
    </location>
</feature>
<accession>Q6SW94</accession>
<accession>D2K3K5</accession>
<reference key="1">
    <citation type="journal article" date="2004" name="J. Gen. Virol.">
        <title>Genetic content of wild-type human cytomegalovirus.</title>
        <authorList>
            <person name="Dolan A."/>
            <person name="Cunningham C."/>
            <person name="Hector R.D."/>
            <person name="Hassan-Walker A.F."/>
            <person name="Lee L."/>
            <person name="Addison C."/>
            <person name="Dargan D.J."/>
            <person name="McGeoch D.J."/>
            <person name="Gatherer D."/>
            <person name="Emery V.C."/>
            <person name="Griffiths P.D."/>
            <person name="Sinzger C."/>
            <person name="McSharry B.P."/>
            <person name="Wilkinson G.W.G."/>
            <person name="Davison A.J."/>
        </authorList>
    </citation>
    <scope>NUCLEOTIDE SEQUENCE [LARGE SCALE GENOMIC DNA]</scope>
</reference>
<organismHost>
    <name type="scientific">Homo sapiens</name>
    <name type="common">Human</name>
    <dbReference type="NCBI Taxonomy" id="9606"/>
</organismHost>
<name>VGLI_HCMVM</name>
<gene>
    <name type="primary">UL37</name>
</gene>
<protein>
    <recommendedName>
        <fullName>UL37 immediate early glycoprotein</fullName>
    </recommendedName>
</protein>
<comment type="function">
    <molecule>Isoform vMIA</molecule>
    <text evidence="2">Multifunctional transmembrane protein that plays several key roles in viral replication. Rapidely traffics from the host endoplasmic reticulum to the outer mitochondrial membrane where it acts to inhibit host immune response, block apoptotic signaling, regulate calcium flux, and induce mitochondrial fragmentation. Sequesters proapoptotic BAX at the outer mitochondrial membrane and prevents cytochrome c release and subsequent initiation of the proapoptotic cascade. Also provoques a calcium efflux from host endoplasmic reticulum and F-actin cytoskeleton disruption. Participates in the increase of host mitochondrial biogenesis, thus promoting viral replication by efficient use of newly made mitochondria. Additionally, a subset of vMIA localizes to peroxisomes, causing fragmentation and blocking peroxisomal MAVS signaling. Mechanistically, inhibits host MAVS oligomerization at peroxisomes in a mitochondrial fission factors (MFF)-dependent manner and in mitochondria independently of mitochondrial fission factors. Plays an essential role in the trafficking of host viperin/RSAD2 from the endoplasmic reticulum to the viral assembly compartment via the mitochondria during viral infection as failure of viperin to localize to the mitochondria results in insufficient lipogenesis and thus reduces viral replication.</text>
</comment>
<comment type="function">
    <molecule>Isoform gpUL37</molecule>
    <text evidence="2">May play a role in escape from the host antiviral response.</text>
</comment>
<comment type="subunit">
    <molecule>Isoform vMIA</molecule>
    <text evidence="2">Interacts with host BAX. Interacts with host RSAD2/viperin; this interaction results in RSAD2/viperin relocalization from the endoplasmic reticulum to the mitochondria, actin cytoskeleton disruption and enhancement of infection. Interacts with host PEX19; this interaction inhibits the peroxisomal-dependent antiviral signaling. Interacts with host CHCHD6; this interaction rewires mitochondria by engaging the conserved MICOS complex.</text>
</comment>
<comment type="subcellular location">
    <molecule>Isoform gpUL37</molecule>
    <subcellularLocation>
        <location evidence="1">Host membrane</location>
        <topology evidence="1">Single-pass membrane protein</topology>
    </subcellularLocation>
    <subcellularLocation>
        <location evidence="1">Host endoplasmic reticulum membrane</location>
        <topology evidence="1">Single-pass membrane protein</topology>
    </subcellularLocation>
    <subcellularLocation>
        <location evidence="1">Host Golgi apparatus membrane</location>
        <topology evidence="1">Single-pass membrane protein</topology>
    </subcellularLocation>
    <subcellularLocation>
        <location evidence="1">Host mitochondrion membrane</location>
        <topology evidence="1">Single-pass membrane protein</topology>
    </subcellularLocation>
    <text evidence="1">The C-terminal fragment localizes to the endoplasmic reticulum while the N-terminal fragment is stable and traffics to mitochondria.</text>
</comment>
<comment type="subcellular location">
    <molecule>Isoform vMIA</molecule>
    <subcellularLocation>
        <location evidence="2">Host mitochondrion membrane</location>
        <topology evidence="3">Single-pass membrane protein</topology>
    </subcellularLocation>
    <subcellularLocation>
        <location evidence="2">Host endoplasmic reticulum membrane</location>
        <topology evidence="3">Single-pass membrane protein</topology>
    </subcellularLocation>
    <subcellularLocation>
        <location evidence="2">Host peroxisome</location>
    </subcellularLocation>
    <text evidence="2">Transported from the endoplasmic reticulum (ER) through the mitochondrial associated membrane (MAMs) to the mitochondrial outer membrane. Associates with internal lipid rafts (LRs) in the MAM.</text>
</comment>
<comment type="subcellular location">
    <molecule>Isoform pUL37m</molecule>
    <subcellularLocation>
        <location evidence="1">Host mitochondrion membrane</location>
        <topology evidence="1">Single-pass membrane protein</topology>
    </subcellularLocation>
    <subcellularLocation>
        <location evidence="1">Host endoplasmic reticulum membrane</location>
        <topology evidence="1">Single-pass membrane protein</topology>
    </subcellularLocation>
    <text evidence="1">Not cleaved or N-glycosylated.</text>
</comment>
<comment type="alternative products">
    <event type="alternative splicing"/>
    <isoform>
        <id>Q6SW94-1</id>
        <name>gpUL37</name>
        <sequence type="displayed"/>
    </isoform>
    <isoform>
        <id>Q6SW94-2</id>
        <name>vMIA</name>
        <sequence type="described" ref="VSP_044022 VSP_044023"/>
    </isoform>
    <isoform>
        <id>Q6SW94-3</id>
        <name>pUL37m</name>
        <sequence type="described" ref="VSP_044024"/>
    </isoform>
</comment>
<comment type="similarity">
    <text evidence="5">Belongs to the immediate early glycoprotein family.</text>
</comment>
<sequence>MSPVYVNLLGSVGLLAFWYFSYRWIQRKRLEDPLPPWLRKKKACALTRRSRHRLRRQHGVIDGENSETERSVDLVAALLAEAGEESVTEDTEREDTEEEREDEEEENEARTPEVNPMDAEGLSGLAREACEALKKALRRHRFLWQRRRRARLLQHNGPQQSHHAAVFCRVHGLRGFQVSVWLLLTLFWSTGYGVSVRCTYHGTDINVTSNATSMNCRLNCTCNHTQIYNGPCAGAESKLPLNVTFRQSRRQWHSVMLTFGFQYHLEGWFPLRILNESRDINVTEVYGEVACFTNDTNITMGQLTLNLTGRSYVLRALARTSPFESSVNWEETNVTDNATSSENNTVTVMSVLTVYAESDYIFLQDMCPRFLKRSVKLAKNNRRNTTFTGTNVTSLPEWTLQQCQGWKYWTTLSIMWKNRRSALLRAKSRALGHWALLSICTVAAGSIALLSLFCILLIGLRRDLLEDFRYICRDEGSSSTKNDVHWIV</sequence>
<keyword id="KW-0025">Alternative splicing</keyword>
<keyword id="KW-0325">Glycoprotein</keyword>
<keyword id="KW-1038">Host endoplasmic reticulum</keyword>
<keyword id="KW-1040">Host Golgi apparatus</keyword>
<keyword id="KW-1043">Host membrane</keyword>
<keyword id="KW-1045">Host mitochondrion</keyword>
<keyword id="KW-0945">Host-virus interaction</keyword>
<keyword id="KW-0472">Membrane</keyword>
<keyword id="KW-1119">Modulation of host cell apoptosis by virus</keyword>
<keyword id="KW-1185">Reference proteome</keyword>
<keyword id="KW-0732">Signal</keyword>
<keyword id="KW-0812">Transmembrane</keyword>
<keyword id="KW-1133">Transmembrane helix</keyword>
<dbReference type="EMBL" id="AY446894">
    <property type="protein sequence ID" value="AAR31602.1"/>
    <property type="molecule type" value="Genomic_DNA"/>
</dbReference>
<dbReference type="RefSeq" id="YP_081496.1">
    <property type="nucleotide sequence ID" value="NC_006273.2"/>
</dbReference>
<dbReference type="BMRB" id="Q6SW94"/>
<dbReference type="GlyCosmos" id="Q6SW94">
    <property type="glycosylation" value="15 sites, No reported glycans"/>
</dbReference>
<dbReference type="GeneID" id="3077462"/>
<dbReference type="KEGG" id="vg:3077462"/>
<dbReference type="Reactome" id="R-HSA-9609690">
    <property type="pathway name" value="HCMV Early Events"/>
</dbReference>
<dbReference type="Proteomes" id="UP000000938">
    <property type="component" value="Segment"/>
</dbReference>
<dbReference type="GO" id="GO:0044167">
    <property type="term" value="C:host cell endoplasmic reticulum membrane"/>
    <property type="evidence" value="ECO:0007669"/>
    <property type="project" value="UniProtKB-SubCell"/>
</dbReference>
<dbReference type="GO" id="GO:0044178">
    <property type="term" value="C:host cell Golgi membrane"/>
    <property type="evidence" value="ECO:0007669"/>
    <property type="project" value="UniProtKB-SubCell"/>
</dbReference>
<dbReference type="GO" id="GO:0044191">
    <property type="term" value="C:host cell mitochondrial membrane"/>
    <property type="evidence" value="ECO:0007669"/>
    <property type="project" value="UniProtKB-SubCell"/>
</dbReference>
<dbReference type="GO" id="GO:0120149">
    <property type="term" value="C:host cell peroxisome"/>
    <property type="evidence" value="ECO:0007669"/>
    <property type="project" value="UniProtKB-SubCell"/>
</dbReference>
<dbReference type="GO" id="GO:0016020">
    <property type="term" value="C:membrane"/>
    <property type="evidence" value="ECO:0007669"/>
    <property type="project" value="UniProtKB-KW"/>
</dbReference>
<dbReference type="GO" id="GO:0052150">
    <property type="term" value="P:symbiont-mediated perturbation of host apoptosis"/>
    <property type="evidence" value="ECO:0007669"/>
    <property type="project" value="UniProtKB-KW"/>
</dbReference>
<dbReference type="InterPro" id="IPR010880">
    <property type="entry name" value="Herpes_UL37_HHV-5-rel"/>
</dbReference>
<dbReference type="Pfam" id="PF07413">
    <property type="entry name" value="Herpes_UL37_2"/>
    <property type="match status" value="1"/>
</dbReference>
<organism>
    <name type="scientific">Human cytomegalovirus (strain Merlin)</name>
    <name type="common">HHV-5</name>
    <name type="synonym">Human herpesvirus 5</name>
    <dbReference type="NCBI Taxonomy" id="295027"/>
    <lineage>
        <taxon>Viruses</taxon>
        <taxon>Duplodnaviria</taxon>
        <taxon>Heunggongvirae</taxon>
        <taxon>Peploviricota</taxon>
        <taxon>Herviviricetes</taxon>
        <taxon>Herpesvirales</taxon>
        <taxon>Orthoherpesviridae</taxon>
        <taxon>Betaherpesvirinae</taxon>
        <taxon>Cytomegalovirus</taxon>
        <taxon>Cytomegalovirus humanbeta5</taxon>
        <taxon>Human cytomegalovirus</taxon>
    </lineage>
</organism>
<evidence type="ECO:0000250" key="1"/>
<evidence type="ECO:0000250" key="2">
    <source>
        <dbReference type="UniProtKB" id="P16778"/>
    </source>
</evidence>
<evidence type="ECO:0000255" key="3"/>
<evidence type="ECO:0000256" key="4">
    <source>
        <dbReference type="SAM" id="MobiDB-lite"/>
    </source>
</evidence>
<evidence type="ECO:0000305" key="5"/>